<sequence length="329" mass="37328">MQQQVEPTLKNVLENQTLKWIFVGGKGGVGKTTTSSSLATLFAKSGKRTIIISTDPAHNLSDCFDQKIGSQPTQIKGIENLSAMEIDPTVDPDKLKLPTLQGFMNDQATKSLLSELISSVPGIDEAMSFAELMNSVDEMKYDLIIFDTAPTGHTLRLLNFPNIMEKGLNKLVQLRYNFQNLASQFQGLFGSQEEFDQQMNQMFSKIETMKDTVTKVNAQMKDRNKTTFIGVCIPEFLSMYETERLVQELTKFKIDIHNIVINQVLFPDDQCKMCNARAKMQKKYLDQMIDLYDDFHVVIMPLQENEVRGIDGLKQFCELLLKPKSVPQF</sequence>
<proteinExistence type="inferred from homology"/>
<reference key="1">
    <citation type="journal article" date="2006" name="Nature">
        <title>Global trends of whole-genome duplications revealed by the ciliate Paramecium tetraurelia.</title>
        <authorList>
            <person name="Aury J.-M."/>
            <person name="Jaillon O."/>
            <person name="Duret L."/>
            <person name="Noel B."/>
            <person name="Jubin C."/>
            <person name="Porcel B.M."/>
            <person name="Segurens B."/>
            <person name="Daubin V."/>
            <person name="Anthouard V."/>
            <person name="Aiach N."/>
            <person name="Arnaiz O."/>
            <person name="Billaut A."/>
            <person name="Beisson J."/>
            <person name="Blanc I."/>
            <person name="Bouhouche K."/>
            <person name="Camara F."/>
            <person name="Duharcourt S."/>
            <person name="Guigo R."/>
            <person name="Gogendeau D."/>
            <person name="Katinka M."/>
            <person name="Keller A.-M."/>
            <person name="Kissmehl R."/>
            <person name="Klotz C."/>
            <person name="Koll F."/>
            <person name="Le Mouel A."/>
            <person name="Lepere G."/>
            <person name="Malinsky S."/>
            <person name="Nowacki M."/>
            <person name="Nowak J.K."/>
            <person name="Plattner H."/>
            <person name="Poulain J."/>
            <person name="Ruiz F."/>
            <person name="Serrano V."/>
            <person name="Zagulski M."/>
            <person name="Dessen P."/>
            <person name="Betermier M."/>
            <person name="Weissenbach J."/>
            <person name="Scarpelli C."/>
            <person name="Schaechter V."/>
            <person name="Sperling L."/>
            <person name="Meyer E."/>
            <person name="Cohen J."/>
            <person name="Wincker P."/>
        </authorList>
    </citation>
    <scope>NUCLEOTIDE SEQUENCE [LARGE SCALE GENOMIC DNA]</scope>
    <source>
        <strain>Stock d4-2</strain>
    </source>
</reference>
<feature type="chain" id="PRO_0000388167" description="ATPase ASNA1 homolog 1">
    <location>
        <begin position="1"/>
        <end position="329"/>
    </location>
</feature>
<feature type="active site" evidence="1">
    <location>
        <position position="55"/>
    </location>
</feature>
<feature type="binding site" evidence="1">
    <location>
        <begin position="26"/>
        <end position="33"/>
    </location>
    <ligand>
        <name>ATP</name>
        <dbReference type="ChEBI" id="CHEBI:30616"/>
    </ligand>
</feature>
<feature type="binding site" evidence="1">
    <location>
        <position position="235"/>
    </location>
    <ligand>
        <name>ATP</name>
        <dbReference type="ChEBI" id="CHEBI:30616"/>
    </ligand>
</feature>
<feature type="binding site" evidence="1">
    <location>
        <position position="262"/>
    </location>
    <ligand>
        <name>ATP</name>
        <dbReference type="ChEBI" id="CHEBI:30616"/>
    </ligand>
</feature>
<feature type="binding site" evidence="1">
    <location>
        <position position="271"/>
    </location>
    <ligand>
        <name>Zn(2+)</name>
        <dbReference type="ChEBI" id="CHEBI:29105"/>
        <note>ligand shared between dimeric partners</note>
    </ligand>
</feature>
<feature type="binding site" evidence="1">
    <location>
        <position position="274"/>
    </location>
    <ligand>
        <name>Zn(2+)</name>
        <dbReference type="ChEBI" id="CHEBI:29105"/>
        <note>ligand shared between dimeric partners</note>
    </ligand>
</feature>
<keyword id="KW-0067">ATP-binding</keyword>
<keyword id="KW-0963">Cytoplasm</keyword>
<keyword id="KW-0256">Endoplasmic reticulum</keyword>
<keyword id="KW-0378">Hydrolase</keyword>
<keyword id="KW-0479">Metal-binding</keyword>
<keyword id="KW-0547">Nucleotide-binding</keyword>
<keyword id="KW-1185">Reference proteome</keyword>
<keyword id="KW-0813">Transport</keyword>
<keyword id="KW-0862">Zinc</keyword>
<dbReference type="EC" id="3.6.-.-" evidence="1"/>
<dbReference type="EMBL" id="CT868028">
    <property type="protein sequence ID" value="CAK63822.1"/>
    <property type="molecule type" value="Genomic_DNA"/>
</dbReference>
<dbReference type="RefSeq" id="XP_001431220.1">
    <property type="nucleotide sequence ID" value="XM_001431183.1"/>
</dbReference>
<dbReference type="SMR" id="A0BZ55"/>
<dbReference type="FunCoup" id="A0BZ55">
    <property type="interactions" value="1122"/>
</dbReference>
<dbReference type="STRING" id="5888.A0BZ55"/>
<dbReference type="EnsemblProtists" id="CAK63822">
    <property type="protein sequence ID" value="CAK63822"/>
    <property type="gene ID" value="GSPATT00033675001"/>
</dbReference>
<dbReference type="GeneID" id="5017004"/>
<dbReference type="KEGG" id="ptm:GSPATT00033675001"/>
<dbReference type="eggNOG" id="KOG2825">
    <property type="taxonomic scope" value="Eukaryota"/>
</dbReference>
<dbReference type="HOGENOM" id="CLU_040761_0_0_1"/>
<dbReference type="InParanoid" id="A0BZ55"/>
<dbReference type="OMA" id="MDAPYEF"/>
<dbReference type="OrthoDB" id="1770at2759"/>
<dbReference type="Proteomes" id="UP000000600">
    <property type="component" value="Partially assembled WGS sequence"/>
</dbReference>
<dbReference type="GO" id="GO:0043529">
    <property type="term" value="C:GET complex"/>
    <property type="evidence" value="ECO:0000318"/>
    <property type="project" value="GO_Central"/>
</dbReference>
<dbReference type="GO" id="GO:0005524">
    <property type="term" value="F:ATP binding"/>
    <property type="evidence" value="ECO:0007669"/>
    <property type="project" value="UniProtKB-UniRule"/>
</dbReference>
<dbReference type="GO" id="GO:0016887">
    <property type="term" value="F:ATP hydrolysis activity"/>
    <property type="evidence" value="ECO:0000318"/>
    <property type="project" value="GO_Central"/>
</dbReference>
<dbReference type="GO" id="GO:0046872">
    <property type="term" value="F:metal ion binding"/>
    <property type="evidence" value="ECO:0007669"/>
    <property type="project" value="UniProtKB-KW"/>
</dbReference>
<dbReference type="GO" id="GO:0071816">
    <property type="term" value="P:tail-anchored membrane protein insertion into ER membrane"/>
    <property type="evidence" value="ECO:0000318"/>
    <property type="project" value="GO_Central"/>
</dbReference>
<dbReference type="CDD" id="cd02035">
    <property type="entry name" value="ArsA"/>
    <property type="match status" value="1"/>
</dbReference>
<dbReference type="FunFam" id="3.40.50.300:FF:001459">
    <property type="entry name" value="ATPase ASNA1 homolog"/>
    <property type="match status" value="1"/>
</dbReference>
<dbReference type="Gene3D" id="3.40.50.300">
    <property type="entry name" value="P-loop containing nucleotide triphosphate hydrolases"/>
    <property type="match status" value="1"/>
</dbReference>
<dbReference type="HAMAP" id="MF_03112">
    <property type="entry name" value="Asna1_Get3"/>
    <property type="match status" value="1"/>
</dbReference>
<dbReference type="InterPro" id="IPR025723">
    <property type="entry name" value="Anion-transp_ATPase-like_dom"/>
</dbReference>
<dbReference type="InterPro" id="IPR016300">
    <property type="entry name" value="ATPase_ArsA/GET3"/>
</dbReference>
<dbReference type="InterPro" id="IPR027542">
    <property type="entry name" value="ATPase_ArsA/GET3_euk"/>
</dbReference>
<dbReference type="InterPro" id="IPR027417">
    <property type="entry name" value="P-loop_NTPase"/>
</dbReference>
<dbReference type="NCBIfam" id="TIGR00345">
    <property type="entry name" value="GET3_arsA_TRC40"/>
    <property type="match status" value="1"/>
</dbReference>
<dbReference type="PANTHER" id="PTHR10803">
    <property type="entry name" value="ARSENICAL PUMP-DRIVING ATPASE ARSENITE-TRANSLOCATING ATPASE"/>
    <property type="match status" value="1"/>
</dbReference>
<dbReference type="PANTHER" id="PTHR10803:SF3">
    <property type="entry name" value="ATPASE GET3"/>
    <property type="match status" value="1"/>
</dbReference>
<dbReference type="Pfam" id="PF02374">
    <property type="entry name" value="ArsA_ATPase"/>
    <property type="match status" value="1"/>
</dbReference>
<dbReference type="SUPFAM" id="SSF52540">
    <property type="entry name" value="P-loop containing nucleoside triphosphate hydrolases"/>
    <property type="match status" value="1"/>
</dbReference>
<gene>
    <name type="ORF">GSPATT00033675001</name>
</gene>
<accession>A0BZ55</accession>
<name>ASNA1_PARTE</name>
<evidence type="ECO:0000255" key="1">
    <source>
        <dbReference type="HAMAP-Rule" id="MF_03112"/>
    </source>
</evidence>
<protein>
    <recommendedName>
        <fullName evidence="1">ATPase ASNA1 homolog 1</fullName>
        <ecNumber evidence="1">3.6.-.-</ecNumber>
    </recommendedName>
    <alternativeName>
        <fullName evidence="1">Arsenical pump-driving ATPase homolog 1</fullName>
    </alternativeName>
    <alternativeName>
        <fullName evidence="1">Arsenite-stimulated ATPase 1</fullName>
    </alternativeName>
</protein>
<organism>
    <name type="scientific">Paramecium tetraurelia</name>
    <dbReference type="NCBI Taxonomy" id="5888"/>
    <lineage>
        <taxon>Eukaryota</taxon>
        <taxon>Sar</taxon>
        <taxon>Alveolata</taxon>
        <taxon>Ciliophora</taxon>
        <taxon>Intramacronucleata</taxon>
        <taxon>Oligohymenophorea</taxon>
        <taxon>Peniculida</taxon>
        <taxon>Parameciidae</taxon>
        <taxon>Paramecium</taxon>
    </lineage>
</organism>
<comment type="function">
    <text evidence="1">ATPase required for the post-translational delivery of tail-anchored (TA) proteins to the endoplasmic reticulum. Recognizes and selectively binds the transmembrane domain of TA proteins in the cytosol. This complex then targets to the endoplasmic reticulum by membrane-bound receptors, where the tail-anchored protein is released for insertion. This process is regulated by ATP binding and hydrolysis. ATP binding drives the homodimer towards the closed dimer state, facilitating recognition of newly synthesized TA membrane proteins. ATP hydrolysis is required for insertion. Subsequently, the homodimer reverts towards the open dimer state, lowering its affinity for the membrane-bound receptor, and returning it to the cytosol to initiate a new round of targeting.</text>
</comment>
<comment type="subunit">
    <text evidence="1">Homodimer.</text>
</comment>
<comment type="subcellular location">
    <subcellularLocation>
        <location evidence="1">Cytoplasm</location>
    </subcellularLocation>
    <subcellularLocation>
        <location evidence="1">Endoplasmic reticulum</location>
    </subcellularLocation>
</comment>
<comment type="similarity">
    <text evidence="1">Belongs to the arsA ATPase family.</text>
</comment>